<protein>
    <recommendedName>
        <fullName>Uncharacterized membrane protein YuzA</fullName>
    </recommendedName>
</protein>
<accession>O32087</accession>
<comment type="subcellular location">
    <subcellularLocation>
        <location evidence="2">Cell membrane</location>
        <topology evidence="2">Multi-pass membrane protein</topology>
    </subcellularLocation>
</comment>
<keyword id="KW-1003">Cell membrane</keyword>
<keyword id="KW-0472">Membrane</keyword>
<keyword id="KW-1185">Reference proteome</keyword>
<keyword id="KW-0812">Transmembrane</keyword>
<keyword id="KW-1133">Transmembrane helix</keyword>
<proteinExistence type="predicted"/>
<evidence type="ECO:0000255" key="1"/>
<evidence type="ECO:0000305" key="2"/>
<reference key="1">
    <citation type="journal article" date="1997" name="Nature">
        <title>The complete genome sequence of the Gram-positive bacterium Bacillus subtilis.</title>
        <authorList>
            <person name="Kunst F."/>
            <person name="Ogasawara N."/>
            <person name="Moszer I."/>
            <person name="Albertini A.M."/>
            <person name="Alloni G."/>
            <person name="Azevedo V."/>
            <person name="Bertero M.G."/>
            <person name="Bessieres P."/>
            <person name="Bolotin A."/>
            <person name="Borchert S."/>
            <person name="Borriss R."/>
            <person name="Boursier L."/>
            <person name="Brans A."/>
            <person name="Braun M."/>
            <person name="Brignell S.C."/>
            <person name="Bron S."/>
            <person name="Brouillet S."/>
            <person name="Bruschi C.V."/>
            <person name="Caldwell B."/>
            <person name="Capuano V."/>
            <person name="Carter N.M."/>
            <person name="Choi S.-K."/>
            <person name="Codani J.-J."/>
            <person name="Connerton I.F."/>
            <person name="Cummings N.J."/>
            <person name="Daniel R.A."/>
            <person name="Denizot F."/>
            <person name="Devine K.M."/>
            <person name="Duesterhoeft A."/>
            <person name="Ehrlich S.D."/>
            <person name="Emmerson P.T."/>
            <person name="Entian K.-D."/>
            <person name="Errington J."/>
            <person name="Fabret C."/>
            <person name="Ferrari E."/>
            <person name="Foulger D."/>
            <person name="Fritz C."/>
            <person name="Fujita M."/>
            <person name="Fujita Y."/>
            <person name="Fuma S."/>
            <person name="Galizzi A."/>
            <person name="Galleron N."/>
            <person name="Ghim S.-Y."/>
            <person name="Glaser P."/>
            <person name="Goffeau A."/>
            <person name="Golightly E.J."/>
            <person name="Grandi G."/>
            <person name="Guiseppi G."/>
            <person name="Guy B.J."/>
            <person name="Haga K."/>
            <person name="Haiech J."/>
            <person name="Harwood C.R."/>
            <person name="Henaut A."/>
            <person name="Hilbert H."/>
            <person name="Holsappel S."/>
            <person name="Hosono S."/>
            <person name="Hullo M.-F."/>
            <person name="Itaya M."/>
            <person name="Jones L.-M."/>
            <person name="Joris B."/>
            <person name="Karamata D."/>
            <person name="Kasahara Y."/>
            <person name="Klaerr-Blanchard M."/>
            <person name="Klein C."/>
            <person name="Kobayashi Y."/>
            <person name="Koetter P."/>
            <person name="Koningstein G."/>
            <person name="Krogh S."/>
            <person name="Kumano M."/>
            <person name="Kurita K."/>
            <person name="Lapidus A."/>
            <person name="Lardinois S."/>
            <person name="Lauber J."/>
            <person name="Lazarevic V."/>
            <person name="Lee S.-M."/>
            <person name="Levine A."/>
            <person name="Liu H."/>
            <person name="Masuda S."/>
            <person name="Mauel C."/>
            <person name="Medigue C."/>
            <person name="Medina N."/>
            <person name="Mellado R.P."/>
            <person name="Mizuno M."/>
            <person name="Moestl D."/>
            <person name="Nakai S."/>
            <person name="Noback M."/>
            <person name="Noone D."/>
            <person name="O'Reilly M."/>
            <person name="Ogawa K."/>
            <person name="Ogiwara A."/>
            <person name="Oudega B."/>
            <person name="Park S.-H."/>
            <person name="Parro V."/>
            <person name="Pohl T.M."/>
            <person name="Portetelle D."/>
            <person name="Porwollik S."/>
            <person name="Prescott A.M."/>
            <person name="Presecan E."/>
            <person name="Pujic P."/>
            <person name="Purnelle B."/>
            <person name="Rapoport G."/>
            <person name="Rey M."/>
            <person name="Reynolds S."/>
            <person name="Rieger M."/>
            <person name="Rivolta C."/>
            <person name="Rocha E."/>
            <person name="Roche B."/>
            <person name="Rose M."/>
            <person name="Sadaie Y."/>
            <person name="Sato T."/>
            <person name="Scanlan E."/>
            <person name="Schleich S."/>
            <person name="Schroeter R."/>
            <person name="Scoffone F."/>
            <person name="Sekiguchi J."/>
            <person name="Sekowska A."/>
            <person name="Seror S.J."/>
            <person name="Serror P."/>
            <person name="Shin B.-S."/>
            <person name="Soldo B."/>
            <person name="Sorokin A."/>
            <person name="Tacconi E."/>
            <person name="Takagi T."/>
            <person name="Takahashi H."/>
            <person name="Takemaru K."/>
            <person name="Takeuchi M."/>
            <person name="Tamakoshi A."/>
            <person name="Tanaka T."/>
            <person name="Terpstra P."/>
            <person name="Tognoni A."/>
            <person name="Tosato V."/>
            <person name="Uchiyama S."/>
            <person name="Vandenbol M."/>
            <person name="Vannier F."/>
            <person name="Vassarotti A."/>
            <person name="Viari A."/>
            <person name="Wambutt R."/>
            <person name="Wedler E."/>
            <person name="Wedler H."/>
            <person name="Weitzenegger T."/>
            <person name="Winters P."/>
            <person name="Wipat A."/>
            <person name="Yamamoto H."/>
            <person name="Yamane K."/>
            <person name="Yasumoto K."/>
            <person name="Yata K."/>
            <person name="Yoshida K."/>
            <person name="Yoshikawa H.-F."/>
            <person name="Zumstein E."/>
            <person name="Yoshikawa H."/>
            <person name="Danchin A."/>
        </authorList>
    </citation>
    <scope>NUCLEOTIDE SEQUENCE [LARGE SCALE GENOMIC DNA]</scope>
    <source>
        <strain>168</strain>
    </source>
</reference>
<organism>
    <name type="scientific">Bacillus subtilis (strain 168)</name>
    <dbReference type="NCBI Taxonomy" id="224308"/>
    <lineage>
        <taxon>Bacteria</taxon>
        <taxon>Bacillati</taxon>
        <taxon>Bacillota</taxon>
        <taxon>Bacilli</taxon>
        <taxon>Bacillales</taxon>
        <taxon>Bacillaceae</taxon>
        <taxon>Bacillus</taxon>
    </lineage>
</organism>
<feature type="chain" id="PRO_0000381934" description="Uncharacterized membrane protein YuzA">
    <location>
        <begin position="1"/>
        <end position="78"/>
    </location>
</feature>
<feature type="transmembrane region" description="Helical" evidence="1">
    <location>
        <begin position="7"/>
        <end position="27"/>
    </location>
</feature>
<feature type="transmembrane region" description="Helical" evidence="1">
    <location>
        <begin position="41"/>
        <end position="61"/>
    </location>
</feature>
<gene>
    <name type="primary">yuzA</name>
    <name type="ordered locus">BSU31380</name>
</gene>
<name>YUZA_BACSU</name>
<dbReference type="EMBL" id="AL009126">
    <property type="protein sequence ID" value="CAB15127.1"/>
    <property type="molecule type" value="Genomic_DNA"/>
</dbReference>
<dbReference type="PIR" id="H70025">
    <property type="entry name" value="H70025"/>
</dbReference>
<dbReference type="RefSeq" id="NP_391016.1">
    <property type="nucleotide sequence ID" value="NC_000964.3"/>
</dbReference>
<dbReference type="RefSeq" id="WP_003220771.1">
    <property type="nucleotide sequence ID" value="NZ_OZ025638.1"/>
</dbReference>
<dbReference type="FunCoup" id="O32087">
    <property type="interactions" value="25"/>
</dbReference>
<dbReference type="STRING" id="224308.BSU31380"/>
<dbReference type="PaxDb" id="224308-BSU31380"/>
<dbReference type="EnsemblBacteria" id="CAB15127">
    <property type="protein sequence ID" value="CAB15127"/>
    <property type="gene ID" value="BSU_31380"/>
</dbReference>
<dbReference type="GeneID" id="937163"/>
<dbReference type="KEGG" id="bsu:BSU31380"/>
<dbReference type="PATRIC" id="fig|224308.179.peg.3402"/>
<dbReference type="eggNOG" id="COG2155">
    <property type="taxonomic scope" value="Bacteria"/>
</dbReference>
<dbReference type="InParanoid" id="O32087"/>
<dbReference type="OrthoDB" id="9812136at2"/>
<dbReference type="PhylomeDB" id="O32087"/>
<dbReference type="BioCyc" id="BSUB:BSU31380-MONOMER"/>
<dbReference type="PRO" id="PR:O32087"/>
<dbReference type="Proteomes" id="UP000001570">
    <property type="component" value="Chromosome"/>
</dbReference>
<dbReference type="GO" id="GO:0005886">
    <property type="term" value="C:plasma membrane"/>
    <property type="evidence" value="ECO:0007669"/>
    <property type="project" value="UniProtKB-SubCell"/>
</dbReference>
<dbReference type="InterPro" id="IPR007211">
    <property type="entry name" value="DUF378"/>
</dbReference>
<dbReference type="PANTHER" id="PTHR37304:SF1">
    <property type="entry name" value="MEMBRANE PROTEIN"/>
    <property type="match status" value="1"/>
</dbReference>
<dbReference type="PANTHER" id="PTHR37304">
    <property type="entry name" value="MEMBRANE PROTEIN-RELATED"/>
    <property type="match status" value="1"/>
</dbReference>
<dbReference type="Pfam" id="PF04070">
    <property type="entry name" value="DUF378"/>
    <property type="match status" value="1"/>
</dbReference>
<sequence>MSTIQRICLVLTIIGAINWGLIGFFQFDLVAAIFGGQGSALSRIIYGLVGIAGLINLGLLFKPNEERSREEAANPEMR</sequence>